<sequence>MLSLKLPRLFRIDQVPQVFHEQGILFGYRHPQSSATACILSLFQMTNETLNIWTHLLPFWFFVWRFMTALYVTDIQNDSYSWPMLVYMCTSCVYPLASSCAHTFSSMSKNARHICYFLDYGAVNLFSLGSAIAYSAYTFPDALVCSTFHECYVALAVLNTILSTGLSCYSRFLELQKPRLCKLLRVLAFAYPYTWDSLPIFYRLFLFPGESSRNEAMLYHQKHMGMTLLASFFYSAHLPERLAPGRFDYIGHSHQLFHVCVILATHLQMEAILLDKTLRREWLLATSRPFSFPQIAAAMLLCIIFSLSNIIYFSAALYRIPEPELHEKET</sequence>
<accession>Q9DCU0</accession>
<accession>Q7TPQ5</accession>
<accession>Q8C6Z8</accession>
<reference key="1">
    <citation type="journal article" date="2005" name="J. Mol. Evol.">
        <title>PAQR proteins: a novel membrane receptor family defined by an ancient 7-transmembrane pass motif.</title>
        <authorList>
            <person name="Tang Y.T."/>
            <person name="Hu T."/>
            <person name="Arterburn M."/>
            <person name="Boyle B."/>
            <person name="Bright J.M."/>
            <person name="Emtage P.C."/>
            <person name="Funk W.D."/>
        </authorList>
    </citation>
    <scope>NUCLEOTIDE SEQUENCE [MRNA]</scope>
    <source>
        <strain>C57BL/6J</strain>
    </source>
</reference>
<reference key="2">
    <citation type="journal article" date="2005" name="Science">
        <title>The transcriptional landscape of the mammalian genome.</title>
        <authorList>
            <person name="Carninci P."/>
            <person name="Kasukawa T."/>
            <person name="Katayama S."/>
            <person name="Gough J."/>
            <person name="Frith M.C."/>
            <person name="Maeda N."/>
            <person name="Oyama R."/>
            <person name="Ravasi T."/>
            <person name="Lenhard B."/>
            <person name="Wells C."/>
            <person name="Kodzius R."/>
            <person name="Shimokawa K."/>
            <person name="Bajic V.B."/>
            <person name="Brenner S.E."/>
            <person name="Batalov S."/>
            <person name="Forrest A.R."/>
            <person name="Zavolan M."/>
            <person name="Davis M.J."/>
            <person name="Wilming L.G."/>
            <person name="Aidinis V."/>
            <person name="Allen J.E."/>
            <person name="Ambesi-Impiombato A."/>
            <person name="Apweiler R."/>
            <person name="Aturaliya R.N."/>
            <person name="Bailey T.L."/>
            <person name="Bansal M."/>
            <person name="Baxter L."/>
            <person name="Beisel K.W."/>
            <person name="Bersano T."/>
            <person name="Bono H."/>
            <person name="Chalk A.M."/>
            <person name="Chiu K.P."/>
            <person name="Choudhary V."/>
            <person name="Christoffels A."/>
            <person name="Clutterbuck D.R."/>
            <person name="Crowe M.L."/>
            <person name="Dalla E."/>
            <person name="Dalrymple B.P."/>
            <person name="de Bono B."/>
            <person name="Della Gatta G."/>
            <person name="di Bernardo D."/>
            <person name="Down T."/>
            <person name="Engstrom P."/>
            <person name="Fagiolini M."/>
            <person name="Faulkner G."/>
            <person name="Fletcher C.F."/>
            <person name="Fukushima T."/>
            <person name="Furuno M."/>
            <person name="Futaki S."/>
            <person name="Gariboldi M."/>
            <person name="Georgii-Hemming P."/>
            <person name="Gingeras T.R."/>
            <person name="Gojobori T."/>
            <person name="Green R.E."/>
            <person name="Gustincich S."/>
            <person name="Harbers M."/>
            <person name="Hayashi Y."/>
            <person name="Hensch T.K."/>
            <person name="Hirokawa N."/>
            <person name="Hill D."/>
            <person name="Huminiecki L."/>
            <person name="Iacono M."/>
            <person name="Ikeo K."/>
            <person name="Iwama A."/>
            <person name="Ishikawa T."/>
            <person name="Jakt M."/>
            <person name="Kanapin A."/>
            <person name="Katoh M."/>
            <person name="Kawasawa Y."/>
            <person name="Kelso J."/>
            <person name="Kitamura H."/>
            <person name="Kitano H."/>
            <person name="Kollias G."/>
            <person name="Krishnan S.P."/>
            <person name="Kruger A."/>
            <person name="Kummerfeld S.K."/>
            <person name="Kurochkin I.V."/>
            <person name="Lareau L.F."/>
            <person name="Lazarevic D."/>
            <person name="Lipovich L."/>
            <person name="Liu J."/>
            <person name="Liuni S."/>
            <person name="McWilliam S."/>
            <person name="Madan Babu M."/>
            <person name="Madera M."/>
            <person name="Marchionni L."/>
            <person name="Matsuda H."/>
            <person name="Matsuzawa S."/>
            <person name="Miki H."/>
            <person name="Mignone F."/>
            <person name="Miyake S."/>
            <person name="Morris K."/>
            <person name="Mottagui-Tabar S."/>
            <person name="Mulder N."/>
            <person name="Nakano N."/>
            <person name="Nakauchi H."/>
            <person name="Ng P."/>
            <person name="Nilsson R."/>
            <person name="Nishiguchi S."/>
            <person name="Nishikawa S."/>
            <person name="Nori F."/>
            <person name="Ohara O."/>
            <person name="Okazaki Y."/>
            <person name="Orlando V."/>
            <person name="Pang K.C."/>
            <person name="Pavan W.J."/>
            <person name="Pavesi G."/>
            <person name="Pesole G."/>
            <person name="Petrovsky N."/>
            <person name="Piazza S."/>
            <person name="Reed J."/>
            <person name="Reid J.F."/>
            <person name="Ring B.Z."/>
            <person name="Ringwald M."/>
            <person name="Rost B."/>
            <person name="Ruan Y."/>
            <person name="Salzberg S.L."/>
            <person name="Sandelin A."/>
            <person name="Schneider C."/>
            <person name="Schoenbach C."/>
            <person name="Sekiguchi K."/>
            <person name="Semple C.A."/>
            <person name="Seno S."/>
            <person name="Sessa L."/>
            <person name="Sheng Y."/>
            <person name="Shibata Y."/>
            <person name="Shimada H."/>
            <person name="Shimada K."/>
            <person name="Silva D."/>
            <person name="Sinclair B."/>
            <person name="Sperling S."/>
            <person name="Stupka E."/>
            <person name="Sugiura K."/>
            <person name="Sultana R."/>
            <person name="Takenaka Y."/>
            <person name="Taki K."/>
            <person name="Tammoja K."/>
            <person name="Tan S.L."/>
            <person name="Tang S."/>
            <person name="Taylor M.S."/>
            <person name="Tegner J."/>
            <person name="Teichmann S.A."/>
            <person name="Ueda H.R."/>
            <person name="van Nimwegen E."/>
            <person name="Verardo R."/>
            <person name="Wei C.L."/>
            <person name="Yagi K."/>
            <person name="Yamanishi H."/>
            <person name="Zabarovsky E."/>
            <person name="Zhu S."/>
            <person name="Zimmer A."/>
            <person name="Hide W."/>
            <person name="Bult C."/>
            <person name="Grimmond S.M."/>
            <person name="Teasdale R.D."/>
            <person name="Liu E.T."/>
            <person name="Brusic V."/>
            <person name="Quackenbush J."/>
            <person name="Wahlestedt C."/>
            <person name="Mattick J.S."/>
            <person name="Hume D.A."/>
            <person name="Kai C."/>
            <person name="Sasaki D."/>
            <person name="Tomaru Y."/>
            <person name="Fukuda S."/>
            <person name="Kanamori-Katayama M."/>
            <person name="Suzuki M."/>
            <person name="Aoki J."/>
            <person name="Arakawa T."/>
            <person name="Iida J."/>
            <person name="Imamura K."/>
            <person name="Itoh M."/>
            <person name="Kato T."/>
            <person name="Kawaji H."/>
            <person name="Kawagashira N."/>
            <person name="Kawashima T."/>
            <person name="Kojima M."/>
            <person name="Kondo S."/>
            <person name="Konno H."/>
            <person name="Nakano K."/>
            <person name="Ninomiya N."/>
            <person name="Nishio T."/>
            <person name="Okada M."/>
            <person name="Plessy C."/>
            <person name="Shibata K."/>
            <person name="Shiraki T."/>
            <person name="Suzuki S."/>
            <person name="Tagami M."/>
            <person name="Waki K."/>
            <person name="Watahiki A."/>
            <person name="Okamura-Oho Y."/>
            <person name="Suzuki H."/>
            <person name="Kawai J."/>
            <person name="Hayashizaki Y."/>
        </authorList>
    </citation>
    <scope>NUCLEOTIDE SEQUENCE [LARGE SCALE MRNA]</scope>
    <source>
        <strain>C57BL/6J</strain>
        <tissue>Embryonic head</tissue>
        <tissue>Kidney</tissue>
        <tissue>Urinary bladder</tissue>
    </source>
</reference>
<reference key="3">
    <citation type="journal article" date="2004" name="Genome Res.">
        <title>The status, quality, and expansion of the NIH full-length cDNA project: the Mammalian Gene Collection (MGC).</title>
        <authorList>
            <consortium name="The MGC Project Team"/>
        </authorList>
    </citation>
    <scope>NUCLEOTIDE SEQUENCE [LARGE SCALE MRNA] OF 1-325</scope>
    <source>
        <strain>FVB/N</strain>
        <tissue>Colon</tissue>
    </source>
</reference>
<comment type="function">
    <text evidence="1">Plasma membrane progesterone (P4) receptor coupled to G proteins. Seems to act through a G(i) mediated pathway. May be involved in oocyte maturation.</text>
</comment>
<comment type="subcellular location">
    <subcellularLocation>
        <location evidence="1">Cell membrane</location>
        <topology evidence="2">Multi-pass membrane protein</topology>
    </subcellularLocation>
</comment>
<comment type="miscellaneous">
    <text evidence="1">Non-classical progesterone receptors involved in extranuclear signaling are classified in 2 groups: the class II progestin and adipoQ receptor (PAQR) family (also called mPRs) (PAQR5, PAQR6, PAQR7, PAQR8 and PAQR9) and the b5-like heme/steroid-binding protein family (also called MAPRs) (PGRMC1, PGRMC2, NENF and CYB5D2).</text>
</comment>
<comment type="similarity">
    <text evidence="3">Belongs to the ADIPOR family.</text>
</comment>
<comment type="sequence caution" evidence="3">
    <conflict type="miscellaneous discrepancy">
        <sequence resource="EMBL-CDS" id="AAH54855"/>
    </conflict>
    <text>Contaminating sequence. Potential poly-A sequence.</text>
</comment>
<comment type="sequence caution" evidence="3">
    <conflict type="erroneous initiation">
        <sequence resource="EMBL-CDS" id="BAC35142"/>
    </conflict>
</comment>
<evidence type="ECO:0000250" key="1">
    <source>
        <dbReference type="UniProtKB" id="Q9NXK6"/>
    </source>
</evidence>
<evidence type="ECO:0000255" key="2"/>
<evidence type="ECO:0000305" key="3"/>
<evidence type="ECO:0000312" key="4">
    <source>
        <dbReference type="MGI" id="MGI:1921340"/>
    </source>
</evidence>
<keyword id="KW-1003">Cell membrane</keyword>
<keyword id="KW-0217">Developmental protein</keyword>
<keyword id="KW-0221">Differentiation</keyword>
<keyword id="KW-0446">Lipid-binding</keyword>
<keyword id="KW-0472">Membrane</keyword>
<keyword id="KW-0896">Oogenesis</keyword>
<keyword id="KW-0675">Receptor</keyword>
<keyword id="KW-1185">Reference proteome</keyword>
<keyword id="KW-0754">Steroid-binding</keyword>
<keyword id="KW-0812">Transmembrane</keyword>
<keyword id="KW-1133">Transmembrane helix</keyword>
<feature type="chain" id="PRO_0000218844" description="Membrane progestin receptor gamma">
    <location>
        <begin position="1"/>
        <end position="330"/>
    </location>
</feature>
<feature type="topological domain" description="Cytoplasmic" evidence="2">
    <location>
        <begin position="1"/>
        <end position="51"/>
    </location>
</feature>
<feature type="transmembrane region" description="Helical; Name=1" evidence="2">
    <location>
        <begin position="52"/>
        <end position="72"/>
    </location>
</feature>
<feature type="topological domain" description="Extracellular" evidence="2">
    <location>
        <begin position="73"/>
        <end position="81"/>
    </location>
</feature>
<feature type="transmembrane region" description="Helical; Name=2" evidence="2">
    <location>
        <begin position="82"/>
        <end position="101"/>
    </location>
</feature>
<feature type="topological domain" description="Cytoplasmic" evidence="2">
    <location>
        <begin position="102"/>
        <end position="113"/>
    </location>
</feature>
<feature type="transmembrane region" description="Helical; Name=3" evidence="2">
    <location>
        <begin position="114"/>
        <end position="134"/>
    </location>
</feature>
<feature type="topological domain" description="Extracellular" evidence="2">
    <location>
        <begin position="135"/>
        <end position="141"/>
    </location>
</feature>
<feature type="transmembrane region" description="Helical; Name=4" evidence="2">
    <location>
        <begin position="142"/>
        <end position="162"/>
    </location>
</feature>
<feature type="topological domain" description="Cytoplasmic" evidence="2">
    <location>
        <begin position="163"/>
        <end position="186"/>
    </location>
</feature>
<feature type="transmembrane region" description="Helical; Name=5" evidence="2">
    <location>
        <begin position="187"/>
        <end position="207"/>
    </location>
</feature>
<feature type="topological domain" description="Extracellular" evidence="2">
    <location>
        <begin position="208"/>
        <end position="253"/>
    </location>
</feature>
<feature type="transmembrane region" description="Helical; Name=6" evidence="2">
    <location>
        <begin position="254"/>
        <end position="274"/>
    </location>
</feature>
<feature type="topological domain" description="Cytoplasmic" evidence="2">
    <location>
        <begin position="275"/>
        <end position="294"/>
    </location>
</feature>
<feature type="transmembrane region" description="Helical; Name=7" evidence="2">
    <location>
        <begin position="295"/>
        <end position="315"/>
    </location>
</feature>
<feature type="topological domain" description="Extracellular" evidence="2">
    <location>
        <begin position="316"/>
        <end position="330"/>
    </location>
</feature>
<name>PAQR5_MOUSE</name>
<protein>
    <recommendedName>
        <fullName evidence="1">Membrane progestin receptor gamma</fullName>
        <shortName evidence="1">mPR gamma</shortName>
    </recommendedName>
    <alternativeName>
        <fullName evidence="1">Membrane progesterone P4 receptor gamma</fullName>
    </alternativeName>
    <alternativeName>
        <fullName evidence="1">Membrane progesterone receptor gamma</fullName>
    </alternativeName>
    <alternativeName>
        <fullName>Progesterone and adipoQ receptor family member 5</fullName>
    </alternativeName>
    <alternativeName>
        <fullName evidence="1">Progestin and adipoQ receptor family member 5</fullName>
    </alternativeName>
    <alternativeName>
        <fullName>Progestin and adipoQ receptor family member V</fullName>
    </alternativeName>
</protein>
<gene>
    <name evidence="4" type="primary">Paqr5</name>
    <name type="synonym">Mprg</name>
</gene>
<organism>
    <name type="scientific">Mus musculus</name>
    <name type="common">Mouse</name>
    <dbReference type="NCBI Taxonomy" id="10090"/>
    <lineage>
        <taxon>Eukaryota</taxon>
        <taxon>Metazoa</taxon>
        <taxon>Chordata</taxon>
        <taxon>Craniata</taxon>
        <taxon>Vertebrata</taxon>
        <taxon>Euteleostomi</taxon>
        <taxon>Mammalia</taxon>
        <taxon>Eutheria</taxon>
        <taxon>Euarchontoglires</taxon>
        <taxon>Glires</taxon>
        <taxon>Rodentia</taxon>
        <taxon>Myomorpha</taxon>
        <taxon>Muroidea</taxon>
        <taxon>Muridae</taxon>
        <taxon>Murinae</taxon>
        <taxon>Mus</taxon>
        <taxon>Mus</taxon>
    </lineage>
</organism>
<dbReference type="EMBL" id="AY424294">
    <property type="protein sequence ID" value="AAR08382.1"/>
    <property type="molecule type" value="mRNA"/>
</dbReference>
<dbReference type="EMBL" id="AK002481">
    <property type="protein sequence ID" value="BAB22133.1"/>
    <property type="molecule type" value="mRNA"/>
</dbReference>
<dbReference type="EMBL" id="AK035475">
    <property type="protein sequence ID" value="BAC29072.1"/>
    <property type="molecule type" value="mRNA"/>
</dbReference>
<dbReference type="EMBL" id="AK052776">
    <property type="protein sequence ID" value="BAC35142.1"/>
    <property type="status" value="ALT_INIT"/>
    <property type="molecule type" value="mRNA"/>
</dbReference>
<dbReference type="EMBL" id="AK085411">
    <property type="protein sequence ID" value="BAC39443.1"/>
    <property type="molecule type" value="mRNA"/>
</dbReference>
<dbReference type="EMBL" id="AK086679">
    <property type="protein sequence ID" value="BAC39718.1"/>
    <property type="molecule type" value="mRNA"/>
</dbReference>
<dbReference type="EMBL" id="BC054855">
    <property type="protein sequence ID" value="AAH54855.1"/>
    <property type="status" value="ALT_SEQ"/>
    <property type="molecule type" value="mRNA"/>
</dbReference>
<dbReference type="CCDS" id="CCDS23261.1"/>
<dbReference type="RefSeq" id="NP_083024.1">
    <property type="nucleotide sequence ID" value="NM_028748.3"/>
</dbReference>
<dbReference type="SMR" id="Q9DCU0"/>
<dbReference type="FunCoup" id="Q9DCU0">
    <property type="interactions" value="34"/>
</dbReference>
<dbReference type="STRING" id="10090.ENSMUSP00000034817"/>
<dbReference type="PhosphoSitePlus" id="Q9DCU0"/>
<dbReference type="PaxDb" id="10090-ENSMUSP00000034817"/>
<dbReference type="ProteomicsDB" id="287949"/>
<dbReference type="Antibodypedia" id="13981">
    <property type="antibodies" value="101 antibodies from 22 providers"/>
</dbReference>
<dbReference type="DNASU" id="74090"/>
<dbReference type="Ensembl" id="ENSMUST00000034817.11">
    <property type="protein sequence ID" value="ENSMUSP00000034817.5"/>
    <property type="gene ID" value="ENSMUSG00000032278.12"/>
</dbReference>
<dbReference type="GeneID" id="74090"/>
<dbReference type="KEGG" id="mmu:74090"/>
<dbReference type="UCSC" id="uc009qaa.1">
    <property type="organism name" value="mouse"/>
</dbReference>
<dbReference type="AGR" id="MGI:1921340"/>
<dbReference type="CTD" id="54852"/>
<dbReference type="MGI" id="MGI:1921340">
    <property type="gene designation" value="Paqr5"/>
</dbReference>
<dbReference type="VEuPathDB" id="HostDB:ENSMUSG00000032278"/>
<dbReference type="eggNOG" id="KOG0748">
    <property type="taxonomic scope" value="Eukaryota"/>
</dbReference>
<dbReference type="GeneTree" id="ENSGT00940000158844"/>
<dbReference type="HOGENOM" id="CLU_052356_1_0_1"/>
<dbReference type="InParanoid" id="Q9DCU0"/>
<dbReference type="OMA" id="IDQMPQV"/>
<dbReference type="OrthoDB" id="529367at2759"/>
<dbReference type="PhylomeDB" id="Q9DCU0"/>
<dbReference type="TreeFam" id="TF319738"/>
<dbReference type="BioGRID-ORCS" id="74090">
    <property type="hits" value="2 hits in 78 CRISPR screens"/>
</dbReference>
<dbReference type="ChiTaRS" id="Paqr5">
    <property type="organism name" value="mouse"/>
</dbReference>
<dbReference type="PRO" id="PR:Q9DCU0"/>
<dbReference type="Proteomes" id="UP000000589">
    <property type="component" value="Chromosome 9"/>
</dbReference>
<dbReference type="RNAct" id="Q9DCU0">
    <property type="molecule type" value="protein"/>
</dbReference>
<dbReference type="Bgee" id="ENSMUSG00000032278">
    <property type="expression patterns" value="Expressed in urinary bladder urothelium and 162 other cell types or tissues"/>
</dbReference>
<dbReference type="ExpressionAtlas" id="Q9DCU0">
    <property type="expression patterns" value="baseline and differential"/>
</dbReference>
<dbReference type="GO" id="GO:0005886">
    <property type="term" value="C:plasma membrane"/>
    <property type="evidence" value="ECO:0007669"/>
    <property type="project" value="UniProtKB-SubCell"/>
</dbReference>
<dbReference type="GO" id="GO:0005496">
    <property type="term" value="F:steroid binding"/>
    <property type="evidence" value="ECO:0007669"/>
    <property type="project" value="UniProtKB-KW"/>
</dbReference>
<dbReference type="GO" id="GO:0048477">
    <property type="term" value="P:oogenesis"/>
    <property type="evidence" value="ECO:0007669"/>
    <property type="project" value="UniProtKB-KW"/>
</dbReference>
<dbReference type="InterPro" id="IPR004254">
    <property type="entry name" value="AdipoR/HlyIII-related"/>
</dbReference>
<dbReference type="PANTHER" id="PTHR20855">
    <property type="entry name" value="ADIPOR/PROGESTIN RECEPTOR-RELATED"/>
    <property type="match status" value="1"/>
</dbReference>
<dbReference type="PANTHER" id="PTHR20855:SF38">
    <property type="entry name" value="MEMBRANE PROGESTIN RECEPTOR GAMMA"/>
    <property type="match status" value="1"/>
</dbReference>
<dbReference type="Pfam" id="PF03006">
    <property type="entry name" value="HlyIII"/>
    <property type="match status" value="1"/>
</dbReference>
<proteinExistence type="evidence at transcript level"/>